<organism>
    <name type="scientific">Rhizobium etli (strain ATCC 51251 / DSM 11541 / JCM 21823 / NBRC 15573 / CFN 42)</name>
    <dbReference type="NCBI Taxonomy" id="347834"/>
    <lineage>
        <taxon>Bacteria</taxon>
        <taxon>Pseudomonadati</taxon>
        <taxon>Pseudomonadota</taxon>
        <taxon>Alphaproteobacteria</taxon>
        <taxon>Hyphomicrobiales</taxon>
        <taxon>Rhizobiaceae</taxon>
        <taxon>Rhizobium/Agrobacterium group</taxon>
        <taxon>Rhizobium</taxon>
    </lineage>
</organism>
<proteinExistence type="inferred from homology"/>
<accession>Q2K2Y0</accession>
<feature type="chain" id="PRO_1000017573" description="Large ribosomal subunit protein bL27">
    <location>
        <begin position="1"/>
        <end position="89"/>
    </location>
</feature>
<feature type="region of interest" description="Disordered" evidence="2">
    <location>
        <begin position="1"/>
        <end position="22"/>
    </location>
</feature>
<keyword id="KW-1185">Reference proteome</keyword>
<keyword id="KW-0687">Ribonucleoprotein</keyword>
<keyword id="KW-0689">Ribosomal protein</keyword>
<name>RL27_RHIEC</name>
<reference key="1">
    <citation type="journal article" date="2006" name="Proc. Natl. Acad. Sci. U.S.A.">
        <title>The partitioned Rhizobium etli genome: genetic and metabolic redundancy in seven interacting replicons.</title>
        <authorList>
            <person name="Gonzalez V."/>
            <person name="Santamaria R.I."/>
            <person name="Bustos P."/>
            <person name="Hernandez-Gonzalez I."/>
            <person name="Medrano-Soto A."/>
            <person name="Moreno-Hagelsieb G."/>
            <person name="Janga S.C."/>
            <person name="Ramirez M.A."/>
            <person name="Jimenez-Jacinto V."/>
            <person name="Collado-Vides J."/>
            <person name="Davila G."/>
        </authorList>
    </citation>
    <scope>NUCLEOTIDE SEQUENCE [LARGE SCALE GENOMIC DNA]</scope>
    <source>
        <strain>ATCC 51251 / DSM 11541 / JCM 21823 / NBRC 15573 / CFN 42</strain>
    </source>
</reference>
<dbReference type="EMBL" id="CP000133">
    <property type="protein sequence ID" value="ABC92806.1"/>
    <property type="molecule type" value="Genomic_DNA"/>
</dbReference>
<dbReference type="RefSeq" id="WP_004676172.1">
    <property type="nucleotide sequence ID" value="NC_007761.1"/>
</dbReference>
<dbReference type="SMR" id="Q2K2Y0"/>
<dbReference type="GeneID" id="91150729"/>
<dbReference type="KEGG" id="ret:RHE_CH04063"/>
<dbReference type="eggNOG" id="COG0211">
    <property type="taxonomic scope" value="Bacteria"/>
</dbReference>
<dbReference type="HOGENOM" id="CLU_095424_4_1_5"/>
<dbReference type="OrthoDB" id="9803474at2"/>
<dbReference type="Proteomes" id="UP000001936">
    <property type="component" value="Chromosome"/>
</dbReference>
<dbReference type="GO" id="GO:0022625">
    <property type="term" value="C:cytosolic large ribosomal subunit"/>
    <property type="evidence" value="ECO:0007669"/>
    <property type="project" value="TreeGrafter"/>
</dbReference>
<dbReference type="GO" id="GO:0003735">
    <property type="term" value="F:structural constituent of ribosome"/>
    <property type="evidence" value="ECO:0007669"/>
    <property type="project" value="InterPro"/>
</dbReference>
<dbReference type="GO" id="GO:0006412">
    <property type="term" value="P:translation"/>
    <property type="evidence" value="ECO:0007669"/>
    <property type="project" value="UniProtKB-UniRule"/>
</dbReference>
<dbReference type="FunFam" id="2.40.50.100:FF:000020">
    <property type="entry name" value="50S ribosomal protein L27"/>
    <property type="match status" value="1"/>
</dbReference>
<dbReference type="Gene3D" id="2.40.50.100">
    <property type="match status" value="1"/>
</dbReference>
<dbReference type="HAMAP" id="MF_00539">
    <property type="entry name" value="Ribosomal_bL27"/>
    <property type="match status" value="1"/>
</dbReference>
<dbReference type="InterPro" id="IPR001684">
    <property type="entry name" value="Ribosomal_bL27"/>
</dbReference>
<dbReference type="InterPro" id="IPR018261">
    <property type="entry name" value="Ribosomal_bL27_CS"/>
</dbReference>
<dbReference type="NCBIfam" id="TIGR00062">
    <property type="entry name" value="L27"/>
    <property type="match status" value="1"/>
</dbReference>
<dbReference type="PANTHER" id="PTHR15893:SF0">
    <property type="entry name" value="LARGE RIBOSOMAL SUBUNIT PROTEIN BL27M"/>
    <property type="match status" value="1"/>
</dbReference>
<dbReference type="PANTHER" id="PTHR15893">
    <property type="entry name" value="RIBOSOMAL PROTEIN L27"/>
    <property type="match status" value="1"/>
</dbReference>
<dbReference type="Pfam" id="PF01016">
    <property type="entry name" value="Ribosomal_L27"/>
    <property type="match status" value="1"/>
</dbReference>
<dbReference type="PRINTS" id="PR00063">
    <property type="entry name" value="RIBOSOMALL27"/>
</dbReference>
<dbReference type="SUPFAM" id="SSF110324">
    <property type="entry name" value="Ribosomal L27 protein-like"/>
    <property type="match status" value="1"/>
</dbReference>
<dbReference type="PROSITE" id="PS00831">
    <property type="entry name" value="RIBOSOMAL_L27"/>
    <property type="match status" value="1"/>
</dbReference>
<gene>
    <name evidence="1" type="primary">rpmA</name>
    <name type="ordered locus">RHE_CH04063</name>
</gene>
<sequence>MAHKKAGGSSRNGRDSESKRLGVKKFGGEAVIAGNIIVRQRGTQWHPGSNVGLGKDHTIFALTAGNVDYRTKANGRVYVSVMPKAEAAE</sequence>
<evidence type="ECO:0000255" key="1">
    <source>
        <dbReference type="HAMAP-Rule" id="MF_00539"/>
    </source>
</evidence>
<evidence type="ECO:0000256" key="2">
    <source>
        <dbReference type="SAM" id="MobiDB-lite"/>
    </source>
</evidence>
<evidence type="ECO:0000305" key="3"/>
<protein>
    <recommendedName>
        <fullName evidence="1">Large ribosomal subunit protein bL27</fullName>
    </recommendedName>
    <alternativeName>
        <fullName evidence="3">50S ribosomal protein L27</fullName>
    </alternativeName>
</protein>
<comment type="similarity">
    <text evidence="1">Belongs to the bacterial ribosomal protein bL27 family.</text>
</comment>